<protein>
    <recommendedName>
        <fullName>ilv operon leader peptide</fullName>
    </recommendedName>
    <alternativeName>
        <fullName>ilvGMEDA operon attenuator peptide</fullName>
    </alternativeName>
</protein>
<sequence>MTALLRVISLVVISVVVIIIPPCGAALGRGKA</sequence>
<feature type="peptide" id="PRO_0000044751" description="ilv operon leader peptide">
    <location>
        <begin position="1"/>
        <end position="32"/>
    </location>
</feature>
<dbReference type="EMBL" id="V00289">
    <property type="protein sequence ID" value="CAA23555.1"/>
    <property type="molecule type" value="Genomic_DNA"/>
</dbReference>
<dbReference type="EMBL" id="V00290">
    <property type="protein sequence ID" value="CAA23557.1"/>
    <property type="molecule type" value="Genomic_DNA"/>
</dbReference>
<dbReference type="EMBL" id="M11651">
    <property type="protein sequence ID" value="AAA24019.1"/>
    <property type="molecule type" value="Genomic_DNA"/>
</dbReference>
<dbReference type="EMBL" id="M32253">
    <property type="protein sequence ID" value="AAA24020.1"/>
    <property type="molecule type" value="Genomic_DNA"/>
</dbReference>
<dbReference type="EMBL" id="M87049">
    <property type="protein sequence ID" value="AAA67570.1"/>
    <property type="molecule type" value="Genomic_DNA"/>
</dbReference>
<dbReference type="EMBL" id="U00096">
    <property type="protein sequence ID" value="AAC77487.1"/>
    <property type="molecule type" value="Genomic_DNA"/>
</dbReference>
<dbReference type="EMBL" id="AP009048">
    <property type="protein sequence ID" value="BAE77529.1"/>
    <property type="molecule type" value="Genomic_DNA"/>
</dbReference>
<dbReference type="PIR" id="A93841">
    <property type="entry name" value="LFECI"/>
</dbReference>
<dbReference type="RefSeq" id="NP_418215.1">
    <property type="nucleotide sequence ID" value="NC_000913.3"/>
</dbReference>
<dbReference type="RefSeq" id="WP_001311244.1">
    <property type="nucleotide sequence ID" value="NZ_STEB01000021.1"/>
</dbReference>
<dbReference type="BioGRID" id="4262607">
    <property type="interactions" value="16"/>
</dbReference>
<dbReference type="FunCoup" id="P62522">
    <property type="interactions" value="7"/>
</dbReference>
<dbReference type="STRING" id="511145.b3766"/>
<dbReference type="PaxDb" id="511145-b3766"/>
<dbReference type="EnsemblBacteria" id="AAC77487">
    <property type="protein sequence ID" value="AAC77487"/>
    <property type="gene ID" value="b3766"/>
</dbReference>
<dbReference type="GeneID" id="948283"/>
<dbReference type="GeneID" id="98391002"/>
<dbReference type="KEGG" id="ecj:JW3739"/>
<dbReference type="KEGG" id="eco:b3766"/>
<dbReference type="KEGG" id="ecoc:C3026_20405"/>
<dbReference type="PATRIC" id="fig|83333.103.peg.60"/>
<dbReference type="EchoBASE" id="EB1249"/>
<dbReference type="HOGENOM" id="CLU_220955_0_0_6"/>
<dbReference type="InParanoid" id="P62522"/>
<dbReference type="BioCyc" id="EcoCyc:EG11270-MONOMER"/>
<dbReference type="PRO" id="PR:P62522"/>
<dbReference type="Proteomes" id="UP000000625">
    <property type="component" value="Chromosome"/>
</dbReference>
<dbReference type="GO" id="GO:0008652">
    <property type="term" value="P:amino acid biosynthetic process"/>
    <property type="evidence" value="ECO:0007669"/>
    <property type="project" value="UniProtKB-KW"/>
</dbReference>
<dbReference type="GO" id="GO:0009082">
    <property type="term" value="P:branched-chain amino acid biosynthetic process"/>
    <property type="evidence" value="ECO:0007669"/>
    <property type="project" value="UniProtKB-KW"/>
</dbReference>
<dbReference type="GO" id="GO:0031555">
    <property type="term" value="P:transcriptional attenuation"/>
    <property type="evidence" value="ECO:0000314"/>
    <property type="project" value="EcoCyc"/>
</dbReference>
<dbReference type="InterPro" id="IPR012567">
    <property type="entry name" value="IlvGEDA_leader"/>
</dbReference>
<dbReference type="NCBIfam" id="NF007744">
    <property type="entry name" value="PRK10424.1"/>
    <property type="match status" value="1"/>
</dbReference>
<dbReference type="Pfam" id="PF08046">
    <property type="entry name" value="IlvGEDA_leader"/>
    <property type="match status" value="1"/>
</dbReference>
<keyword id="KW-0028">Amino-acid biosynthesis</keyword>
<keyword id="KW-0100">Branched-chain amino acid biosynthesis</keyword>
<keyword id="KW-0428">Leader peptide</keyword>
<keyword id="KW-1185">Reference proteome</keyword>
<gene>
    <name type="primary">ilvL</name>
    <name type="ordered locus">b3766</name>
    <name type="ordered locus">JW3739</name>
</gene>
<proteinExistence type="predicted"/>
<reference key="1">
    <citation type="journal article" date="1980" name="Proc. Natl. Acad. Sci. U.S.A.">
        <title>Nucleotide sequence of ilvGEDA operon attenuator region of Escherichia coli.</title>
        <authorList>
            <person name="Nargang F.E."/>
            <person name="Subrahmanyam C.S."/>
            <person name="Umbarger H.E."/>
        </authorList>
    </citation>
    <scope>NUCLEOTIDE SEQUENCE [GENOMIC DNA]</scope>
</reference>
<reference key="2">
    <citation type="journal article" date="1981" name="Proc. Natl. Acad. Sci. U.S.A.">
        <title>Molecular basis of valine resistance in Escherichia coli K-12.</title>
        <authorList>
            <person name="Lawther R.P."/>
            <person name="Calhoun D.H."/>
            <person name="Adams C.W."/>
            <person name="Hauser C.A."/>
            <person name="Gray J."/>
            <person name="Hatfield G.W."/>
        </authorList>
    </citation>
    <scope>NUCLEOTIDE SEQUENCE [GENOMIC DNA]</scope>
    <source>
        <strain>K12</strain>
    </source>
</reference>
<reference key="3">
    <citation type="journal article" date="1985" name="J. Bacteriol.">
        <title>Comparison of the regulatory regions of ilvGEDA operons from several enteric organisms.</title>
        <authorList>
            <person name="Harms E."/>
            <person name="Hsu J.-H."/>
            <person name="Subrahmanyam C.S."/>
            <person name="Umbarger H.E."/>
        </authorList>
    </citation>
    <scope>NUCLEOTIDE SEQUENCE [GENOMIC DNA]</scope>
</reference>
<reference key="4">
    <citation type="journal article" date="1987" name="Nucleic Acids Res.">
        <title>The complete nucleotide sequence of the ilvGMEDA operon of Escherichia coli K-12.</title>
        <authorList>
            <person name="Lawther R.P."/>
            <person name="Wek R.C."/>
            <person name="Lopes J.M."/>
            <person name="Pereira R."/>
            <person name="Taillon B.E."/>
            <person name="Hatfield G.W."/>
        </authorList>
    </citation>
    <scope>NUCLEOTIDE SEQUENCE [GENOMIC DNA]</scope>
    <source>
        <strain>K12</strain>
    </source>
</reference>
<reference key="5">
    <citation type="journal article" date="1992" name="Science">
        <title>Analysis of the Escherichia coli genome: DNA sequence of the region from 84.5 to 86.5 minutes.</title>
        <authorList>
            <person name="Daniels D.L."/>
            <person name="Plunkett G. III"/>
            <person name="Burland V.D."/>
            <person name="Blattner F.R."/>
        </authorList>
    </citation>
    <scope>NUCLEOTIDE SEQUENCE [LARGE SCALE GENOMIC DNA]</scope>
    <source>
        <strain>K12 / MG1655 / ATCC 47076</strain>
    </source>
</reference>
<reference key="6">
    <citation type="journal article" date="1997" name="Science">
        <title>The complete genome sequence of Escherichia coli K-12.</title>
        <authorList>
            <person name="Blattner F.R."/>
            <person name="Plunkett G. III"/>
            <person name="Bloch C.A."/>
            <person name="Perna N.T."/>
            <person name="Burland V."/>
            <person name="Riley M."/>
            <person name="Collado-Vides J."/>
            <person name="Glasner J.D."/>
            <person name="Rode C.K."/>
            <person name="Mayhew G.F."/>
            <person name="Gregor J."/>
            <person name="Davis N.W."/>
            <person name="Kirkpatrick H.A."/>
            <person name="Goeden M.A."/>
            <person name="Rose D.J."/>
            <person name="Mau B."/>
            <person name="Shao Y."/>
        </authorList>
    </citation>
    <scope>NUCLEOTIDE SEQUENCE [LARGE SCALE GENOMIC DNA]</scope>
    <source>
        <strain>K12 / MG1655 / ATCC 47076</strain>
    </source>
</reference>
<reference key="7">
    <citation type="journal article" date="2006" name="Mol. Syst. Biol.">
        <title>Highly accurate genome sequences of Escherichia coli K-12 strains MG1655 and W3110.</title>
        <authorList>
            <person name="Hayashi K."/>
            <person name="Morooka N."/>
            <person name="Yamamoto Y."/>
            <person name="Fujita K."/>
            <person name="Isono K."/>
            <person name="Choi S."/>
            <person name="Ohtsubo E."/>
            <person name="Baba T."/>
            <person name="Wanner B.L."/>
            <person name="Mori H."/>
            <person name="Horiuchi T."/>
        </authorList>
    </citation>
    <scope>NUCLEOTIDE SEQUENCE [LARGE SCALE GENOMIC DNA]</scope>
    <source>
        <strain>K12 / W3110 / ATCC 27325 / DSM 5911</strain>
    </source>
</reference>
<organism>
    <name type="scientific">Escherichia coli (strain K12)</name>
    <dbReference type="NCBI Taxonomy" id="83333"/>
    <lineage>
        <taxon>Bacteria</taxon>
        <taxon>Pseudomonadati</taxon>
        <taxon>Pseudomonadota</taxon>
        <taxon>Gammaproteobacteria</taxon>
        <taxon>Enterobacterales</taxon>
        <taxon>Enterobacteriaceae</taxon>
        <taxon>Escherichia</taxon>
    </lineage>
</organism>
<accession>P62522</accession>
<accession>P03060</accession>
<accession>Q2M877</accession>
<name>LPID_ECOLI</name>